<proteinExistence type="inferred from homology"/>
<feature type="chain" id="PRO_0000395124" description="Probable glucan endo-1,3-beta-glucosidase btgC">
    <location>
        <begin position="1"/>
        <end position="688"/>
    </location>
</feature>
<feature type="topological domain" description="Cytoplasmic" evidence="3">
    <location>
        <begin position="1"/>
        <end position="307"/>
    </location>
</feature>
<feature type="transmembrane region" description="Helical; Signal-anchor for type II membrane protein" evidence="3">
    <location>
        <begin position="308"/>
        <end position="328"/>
    </location>
</feature>
<feature type="topological domain" description="Extracellular" evidence="3">
    <location>
        <begin position="329"/>
        <end position="688"/>
    </location>
</feature>
<feature type="region of interest" description="Disordered" evidence="4">
    <location>
        <begin position="1"/>
        <end position="91"/>
    </location>
</feature>
<feature type="region of interest" description="Disordered" evidence="4">
    <location>
        <begin position="126"/>
        <end position="148"/>
    </location>
</feature>
<feature type="region of interest" description="Disordered" evidence="4">
    <location>
        <begin position="168"/>
        <end position="195"/>
    </location>
</feature>
<feature type="region of interest" description="Disordered" evidence="4">
    <location>
        <begin position="334"/>
        <end position="363"/>
    </location>
</feature>
<feature type="compositionally biased region" description="Polar residues" evidence="4">
    <location>
        <begin position="175"/>
        <end position="188"/>
    </location>
</feature>
<feature type="compositionally biased region" description="Low complexity" evidence="4">
    <location>
        <begin position="341"/>
        <end position="355"/>
    </location>
</feature>
<feature type="active site" description="Proton donor" evidence="2">
    <location>
        <position position="491"/>
    </location>
</feature>
<feature type="active site" description="Nucleophile" evidence="2">
    <location>
        <position position="590"/>
    </location>
</feature>
<feature type="glycosylation site" description="N-linked (GlcNAc...) asparagine" evidence="3">
    <location>
        <position position="408"/>
    </location>
</feature>
<feature type="glycosylation site" description="N-linked (GlcNAc...) asparagine" evidence="3">
    <location>
        <position position="431"/>
    </location>
</feature>
<feature type="glycosylation site" description="N-linked (GlcNAc...) asparagine" evidence="3">
    <location>
        <position position="459"/>
    </location>
</feature>
<feature type="glycosylation site" description="N-linked (GlcNAc...) asparagine" evidence="3">
    <location>
        <position position="609"/>
    </location>
</feature>
<feature type="glycosylation site" description="N-linked (GlcNAc...) asparagine" evidence="3">
    <location>
        <position position="635"/>
    </location>
</feature>
<gene>
    <name type="primary">btgC</name>
    <name type="ORF">AFUA_5G08780</name>
</gene>
<organism>
    <name type="scientific">Aspergillus fumigatus (strain ATCC MYA-4609 / CBS 101355 / FGSC A1100 / Af293)</name>
    <name type="common">Neosartorya fumigata</name>
    <dbReference type="NCBI Taxonomy" id="330879"/>
    <lineage>
        <taxon>Eukaryota</taxon>
        <taxon>Fungi</taxon>
        <taxon>Dikarya</taxon>
        <taxon>Ascomycota</taxon>
        <taxon>Pezizomycotina</taxon>
        <taxon>Eurotiomycetes</taxon>
        <taxon>Eurotiomycetidae</taxon>
        <taxon>Eurotiales</taxon>
        <taxon>Aspergillaceae</taxon>
        <taxon>Aspergillus</taxon>
        <taxon>Aspergillus subgen. Fumigati</taxon>
    </lineage>
</organism>
<protein>
    <recommendedName>
        <fullName>Probable glucan endo-1,3-beta-glucosidase btgC</fullName>
        <ecNumber>3.2.1.39</ecNumber>
    </recommendedName>
    <alternativeName>
        <fullName>Endo-1,3-beta-glucanase btgC</fullName>
    </alternativeName>
    <alternativeName>
        <fullName>Laminarinase btgC</fullName>
    </alternativeName>
</protein>
<reference key="1">
    <citation type="journal article" date="2005" name="Nature">
        <title>Genomic sequence of the pathogenic and allergenic filamentous fungus Aspergillus fumigatus.</title>
        <authorList>
            <person name="Nierman W.C."/>
            <person name="Pain A."/>
            <person name="Anderson M.J."/>
            <person name="Wortman J.R."/>
            <person name="Kim H.S."/>
            <person name="Arroyo J."/>
            <person name="Berriman M."/>
            <person name="Abe K."/>
            <person name="Archer D.B."/>
            <person name="Bermejo C."/>
            <person name="Bennett J.W."/>
            <person name="Bowyer P."/>
            <person name="Chen D."/>
            <person name="Collins M."/>
            <person name="Coulsen R."/>
            <person name="Davies R."/>
            <person name="Dyer P.S."/>
            <person name="Farman M.L."/>
            <person name="Fedorova N."/>
            <person name="Fedorova N.D."/>
            <person name="Feldblyum T.V."/>
            <person name="Fischer R."/>
            <person name="Fosker N."/>
            <person name="Fraser A."/>
            <person name="Garcia J.L."/>
            <person name="Garcia M.J."/>
            <person name="Goble A."/>
            <person name="Goldman G.H."/>
            <person name="Gomi K."/>
            <person name="Griffith-Jones S."/>
            <person name="Gwilliam R."/>
            <person name="Haas B.J."/>
            <person name="Haas H."/>
            <person name="Harris D.E."/>
            <person name="Horiuchi H."/>
            <person name="Huang J."/>
            <person name="Humphray S."/>
            <person name="Jimenez J."/>
            <person name="Keller N."/>
            <person name="Khouri H."/>
            <person name="Kitamoto K."/>
            <person name="Kobayashi T."/>
            <person name="Konzack S."/>
            <person name="Kulkarni R."/>
            <person name="Kumagai T."/>
            <person name="Lafton A."/>
            <person name="Latge J.-P."/>
            <person name="Li W."/>
            <person name="Lord A."/>
            <person name="Lu C."/>
            <person name="Majoros W.H."/>
            <person name="May G.S."/>
            <person name="Miller B.L."/>
            <person name="Mohamoud Y."/>
            <person name="Molina M."/>
            <person name="Monod M."/>
            <person name="Mouyna I."/>
            <person name="Mulligan S."/>
            <person name="Murphy L.D."/>
            <person name="O'Neil S."/>
            <person name="Paulsen I."/>
            <person name="Penalva M.A."/>
            <person name="Pertea M."/>
            <person name="Price C."/>
            <person name="Pritchard B.L."/>
            <person name="Quail M.A."/>
            <person name="Rabbinowitsch E."/>
            <person name="Rawlins N."/>
            <person name="Rajandream M.A."/>
            <person name="Reichard U."/>
            <person name="Renauld H."/>
            <person name="Robson G.D."/>
            <person name="Rodriguez de Cordoba S."/>
            <person name="Rodriguez-Pena J.M."/>
            <person name="Ronning C.M."/>
            <person name="Rutter S."/>
            <person name="Salzberg S.L."/>
            <person name="Sanchez M."/>
            <person name="Sanchez-Ferrero J.C."/>
            <person name="Saunders D."/>
            <person name="Seeger K."/>
            <person name="Squares R."/>
            <person name="Squares S."/>
            <person name="Takeuchi M."/>
            <person name="Tekaia F."/>
            <person name="Turner G."/>
            <person name="Vazquez de Aldana C.R."/>
            <person name="Weidman J."/>
            <person name="White O."/>
            <person name="Woodward J.R."/>
            <person name="Yu J.-H."/>
            <person name="Fraser C.M."/>
            <person name="Galagan J.E."/>
            <person name="Asai K."/>
            <person name="Machida M."/>
            <person name="Hall N."/>
            <person name="Barrell B.G."/>
            <person name="Denning D.W."/>
        </authorList>
    </citation>
    <scope>NUCLEOTIDE SEQUENCE [LARGE SCALE GENOMIC DNA]</scope>
    <source>
        <strain>ATCC MYA-4609 / CBS 101355 / FGSC A1100 / Af293</strain>
    </source>
</reference>
<comment type="function">
    <text evidence="1">Glucanases play a role in cell expansion during growth, in cell-cell fusion during mating, and in spore release during sporulation. This enzyme may be involved in beta-glucan degradation. Active on laminarin and lichenan (By similarity).</text>
</comment>
<comment type="catalytic activity">
    <reaction>
        <text>Hydrolysis of (1-&gt;3)-beta-D-glucosidic linkages in (1-&gt;3)-beta-D-glucans.</text>
        <dbReference type="EC" id="3.2.1.39"/>
    </reaction>
</comment>
<comment type="subcellular location">
    <subcellularLocation>
        <location evidence="1">Cell membrane</location>
        <topology evidence="1">Single-pass type II membrane protein</topology>
    </subcellularLocation>
</comment>
<comment type="similarity">
    <text evidence="5">Belongs to the glycosyl hydrolase 17 family.</text>
</comment>
<evidence type="ECO:0000250" key="1"/>
<evidence type="ECO:0000250" key="2">
    <source>
        <dbReference type="UniProtKB" id="O22317"/>
    </source>
</evidence>
<evidence type="ECO:0000255" key="3"/>
<evidence type="ECO:0000256" key="4">
    <source>
        <dbReference type="SAM" id="MobiDB-lite"/>
    </source>
</evidence>
<evidence type="ECO:0000305" key="5"/>
<sequence>MSGPNRTYSFGEGDDSLAHPSSRTHAMHSQYDDVSPISDGARMNPMNGQGMDHGLASVLEDGRQGWGRSPEPSPSLLTGSSATPGMDNLGPGAVGGGISGIALSVANSHDRLSGVEALMGTDGQEANIPAERGLSTTGSDNPYVPEPPEHRYSYGSNIALGAAAAPAGQLTPGQSVSHLSSTNPSQRNLYDIPYQDVGGLNAGPYQRHSAYSSNDLPVDINPDEIVDDGDDGFVPAPNSGSGARKSQAIPAAAGGAAAGGVLGNLGGLFGGKSAADTSYGPVPGAGLEAGEKGRWVKPKPGGGNKKRGWIVGAILAFIIIGAIVGGAVGGTIGHRGNEEPSSASSASSSSTQTATEDTSVNGDLDKNSAEIKALMNNKNLHKVFPGIDYTPWGVQYPLCLKYPPSQNNVTRDMAVLTQLTNNVRLYGTDCNQTEMVLHAIDKLEIKDMKIWLGVWIDSNETTSRRQIDQLYKIIDDAKDISIFNGAIVGNEALYRAGSDKTSAQTTLINYMQEVKDHFKKKNIDLPVATSDLGDNWDATLVQAADVVMANVHPFFGGIPVDQAAAWTWRFWQDHNVALTKGTNKKQIISEVGWPSGGGNDCGQGANCPNDTAGAVAGVDELNKFMEDWVCQALDNGTDYFWFEAFDEPWKIVYNTGKENWEDKWGLMDSARNLKPGLKIPDCGGKTAT</sequence>
<name>BTGC_ASPFU</name>
<keyword id="KW-0119">Carbohydrate metabolism</keyword>
<keyword id="KW-1003">Cell membrane</keyword>
<keyword id="KW-0961">Cell wall biogenesis/degradation</keyword>
<keyword id="KW-0325">Glycoprotein</keyword>
<keyword id="KW-0378">Hydrolase</keyword>
<keyword id="KW-0472">Membrane</keyword>
<keyword id="KW-0624">Polysaccharide degradation</keyword>
<keyword id="KW-1185">Reference proteome</keyword>
<keyword id="KW-0735">Signal-anchor</keyword>
<keyword id="KW-0812">Transmembrane</keyword>
<keyword id="KW-1133">Transmembrane helix</keyword>
<dbReference type="EC" id="3.2.1.39"/>
<dbReference type="EMBL" id="AAHF01000003">
    <property type="protein sequence ID" value="EAL91721.1"/>
    <property type="molecule type" value="Genomic_DNA"/>
</dbReference>
<dbReference type="RefSeq" id="XP_753759.1">
    <property type="nucleotide sequence ID" value="XM_748666.1"/>
</dbReference>
<dbReference type="SMR" id="Q4WUK5"/>
<dbReference type="STRING" id="330879.Q4WUK5"/>
<dbReference type="GlyCosmos" id="Q4WUK5">
    <property type="glycosylation" value="5 sites, No reported glycans"/>
</dbReference>
<dbReference type="EnsemblFungi" id="EAL91721">
    <property type="protein sequence ID" value="EAL91721"/>
    <property type="gene ID" value="AFUA_5G08780"/>
</dbReference>
<dbReference type="GeneID" id="3510833"/>
<dbReference type="KEGG" id="afm:AFUA_5G08780"/>
<dbReference type="eggNOG" id="ENOG502QTKT">
    <property type="taxonomic scope" value="Eukaryota"/>
</dbReference>
<dbReference type="HOGENOM" id="CLU_011476_0_1_1"/>
<dbReference type="InParanoid" id="Q4WUK5"/>
<dbReference type="OMA" id="QYPDCLK"/>
<dbReference type="OrthoDB" id="68336at2759"/>
<dbReference type="Proteomes" id="UP000002530">
    <property type="component" value="Chromosome 5"/>
</dbReference>
<dbReference type="GO" id="GO:0009986">
    <property type="term" value="C:cell surface"/>
    <property type="evidence" value="ECO:0000318"/>
    <property type="project" value="GO_Central"/>
</dbReference>
<dbReference type="GO" id="GO:0005576">
    <property type="term" value="C:extracellular region"/>
    <property type="evidence" value="ECO:0000318"/>
    <property type="project" value="GO_Central"/>
</dbReference>
<dbReference type="GO" id="GO:0009277">
    <property type="term" value="C:fungal-type cell wall"/>
    <property type="evidence" value="ECO:0000318"/>
    <property type="project" value="GO_Central"/>
</dbReference>
<dbReference type="GO" id="GO:0005886">
    <property type="term" value="C:plasma membrane"/>
    <property type="evidence" value="ECO:0007669"/>
    <property type="project" value="UniProtKB-SubCell"/>
</dbReference>
<dbReference type="GO" id="GO:0042973">
    <property type="term" value="F:glucan endo-1,3-beta-D-glucosidase activity"/>
    <property type="evidence" value="ECO:0000318"/>
    <property type="project" value="GO_Central"/>
</dbReference>
<dbReference type="GO" id="GO:0071555">
    <property type="term" value="P:cell wall organization"/>
    <property type="evidence" value="ECO:0000318"/>
    <property type="project" value="GO_Central"/>
</dbReference>
<dbReference type="GO" id="GO:0000272">
    <property type="term" value="P:polysaccharide catabolic process"/>
    <property type="evidence" value="ECO:0007669"/>
    <property type="project" value="UniProtKB-KW"/>
</dbReference>
<dbReference type="FunFam" id="3.20.20.80:FF:000151">
    <property type="entry name" value="Glucan endo-1,3-beta-glucosidase btgC"/>
    <property type="match status" value="1"/>
</dbReference>
<dbReference type="Gene3D" id="3.20.20.80">
    <property type="entry name" value="Glycosidases"/>
    <property type="match status" value="1"/>
</dbReference>
<dbReference type="InterPro" id="IPR050732">
    <property type="entry name" value="Beta-glucan_modifiers"/>
</dbReference>
<dbReference type="InterPro" id="IPR017853">
    <property type="entry name" value="Glycoside_hydrolase_SF"/>
</dbReference>
<dbReference type="PANTHER" id="PTHR16631">
    <property type="entry name" value="GLUCAN 1,3-BETA-GLUCOSIDASE"/>
    <property type="match status" value="1"/>
</dbReference>
<dbReference type="PANTHER" id="PTHR16631:SF17">
    <property type="entry name" value="GLUCAN ENDO-1,3-BETA-GLUCOSIDASE BTGC"/>
    <property type="match status" value="1"/>
</dbReference>
<dbReference type="SUPFAM" id="SSF51445">
    <property type="entry name" value="(Trans)glycosidases"/>
    <property type="match status" value="1"/>
</dbReference>
<accession>Q4WUK5</accession>